<protein>
    <recommendedName>
        <fullName>Glial fibrillary acidic protein</fullName>
        <shortName>GFAP</shortName>
    </recommendedName>
</protein>
<proteinExistence type="evidence at protein level"/>
<organism>
    <name type="scientific">Mus musculus</name>
    <name type="common">Mouse</name>
    <dbReference type="NCBI Taxonomy" id="10090"/>
    <lineage>
        <taxon>Eukaryota</taxon>
        <taxon>Metazoa</taxon>
        <taxon>Chordata</taxon>
        <taxon>Craniata</taxon>
        <taxon>Vertebrata</taxon>
        <taxon>Euteleostomi</taxon>
        <taxon>Mammalia</taxon>
        <taxon>Eutheria</taxon>
        <taxon>Euarchontoglires</taxon>
        <taxon>Glires</taxon>
        <taxon>Rodentia</taxon>
        <taxon>Myomorpha</taxon>
        <taxon>Muroidea</taxon>
        <taxon>Muridae</taxon>
        <taxon>Murinae</taxon>
        <taxon>Mus</taxon>
        <taxon>Mus</taxon>
    </lineage>
</organism>
<sequence>MERRRITSARRSYASETVVRGLGPSRQLGTMPRFSLSRMTPPLPARVDFSLAGALNAGFKETRASERAEMMELNDRFASYIEKVRFLEQQNKALAAELNQLRAKEPTKLADVYQAELRELRLRLDQLTANSARLEVERDNFAQDLGTLRQKLQDETNLRLEAENNLAAYRQEADEATLARVDLERKVESLEEEIQFLRKIYEEEVRELREQLAQQQVHVEMDVAKPDLTAALREIRTQYEAVATSNMQETEEWYRSKFADLTDAASRNAELLRQAKHEANDYRRQLQALTCDLESLRGTNESLERQMREQEERHARESASYQEALARLEEEGQSLKEEMARHLQEYQDLLNVKLALDIEIATYRKLLEGEENRITIPVQTFSNLQIRETSLDTKSVSEGHLKRNIVVKTVEMRDGEVIKDSKQEHKDVVM</sequence>
<reference key="1">
    <citation type="journal article" date="1985" name="Nucleic Acids Res.">
        <title>Structure of the mouse glial fibrillary acidic protein gene: implications for the evolution of the intermediate filament multigene family.</title>
        <authorList>
            <person name="Balcarek J.M."/>
            <person name="Cowan N.J."/>
        </authorList>
    </citation>
    <scope>NUCLEOTIDE SEQUENCE [GENOMIC DNA]</scope>
</reference>
<reference key="2">
    <citation type="journal article" date="2005" name="Science">
        <title>The transcriptional landscape of the mammalian genome.</title>
        <authorList>
            <person name="Carninci P."/>
            <person name="Kasukawa T."/>
            <person name="Katayama S."/>
            <person name="Gough J."/>
            <person name="Frith M.C."/>
            <person name="Maeda N."/>
            <person name="Oyama R."/>
            <person name="Ravasi T."/>
            <person name="Lenhard B."/>
            <person name="Wells C."/>
            <person name="Kodzius R."/>
            <person name="Shimokawa K."/>
            <person name="Bajic V.B."/>
            <person name="Brenner S.E."/>
            <person name="Batalov S."/>
            <person name="Forrest A.R."/>
            <person name="Zavolan M."/>
            <person name="Davis M.J."/>
            <person name="Wilming L.G."/>
            <person name="Aidinis V."/>
            <person name="Allen J.E."/>
            <person name="Ambesi-Impiombato A."/>
            <person name="Apweiler R."/>
            <person name="Aturaliya R.N."/>
            <person name="Bailey T.L."/>
            <person name="Bansal M."/>
            <person name="Baxter L."/>
            <person name="Beisel K.W."/>
            <person name="Bersano T."/>
            <person name="Bono H."/>
            <person name="Chalk A.M."/>
            <person name="Chiu K.P."/>
            <person name="Choudhary V."/>
            <person name="Christoffels A."/>
            <person name="Clutterbuck D.R."/>
            <person name="Crowe M.L."/>
            <person name="Dalla E."/>
            <person name="Dalrymple B.P."/>
            <person name="de Bono B."/>
            <person name="Della Gatta G."/>
            <person name="di Bernardo D."/>
            <person name="Down T."/>
            <person name="Engstrom P."/>
            <person name="Fagiolini M."/>
            <person name="Faulkner G."/>
            <person name="Fletcher C.F."/>
            <person name="Fukushima T."/>
            <person name="Furuno M."/>
            <person name="Futaki S."/>
            <person name="Gariboldi M."/>
            <person name="Georgii-Hemming P."/>
            <person name="Gingeras T.R."/>
            <person name="Gojobori T."/>
            <person name="Green R.E."/>
            <person name="Gustincich S."/>
            <person name="Harbers M."/>
            <person name="Hayashi Y."/>
            <person name="Hensch T.K."/>
            <person name="Hirokawa N."/>
            <person name="Hill D."/>
            <person name="Huminiecki L."/>
            <person name="Iacono M."/>
            <person name="Ikeo K."/>
            <person name="Iwama A."/>
            <person name="Ishikawa T."/>
            <person name="Jakt M."/>
            <person name="Kanapin A."/>
            <person name="Katoh M."/>
            <person name="Kawasawa Y."/>
            <person name="Kelso J."/>
            <person name="Kitamura H."/>
            <person name="Kitano H."/>
            <person name="Kollias G."/>
            <person name="Krishnan S.P."/>
            <person name="Kruger A."/>
            <person name="Kummerfeld S.K."/>
            <person name="Kurochkin I.V."/>
            <person name="Lareau L.F."/>
            <person name="Lazarevic D."/>
            <person name="Lipovich L."/>
            <person name="Liu J."/>
            <person name="Liuni S."/>
            <person name="McWilliam S."/>
            <person name="Madan Babu M."/>
            <person name="Madera M."/>
            <person name="Marchionni L."/>
            <person name="Matsuda H."/>
            <person name="Matsuzawa S."/>
            <person name="Miki H."/>
            <person name="Mignone F."/>
            <person name="Miyake S."/>
            <person name="Morris K."/>
            <person name="Mottagui-Tabar S."/>
            <person name="Mulder N."/>
            <person name="Nakano N."/>
            <person name="Nakauchi H."/>
            <person name="Ng P."/>
            <person name="Nilsson R."/>
            <person name="Nishiguchi S."/>
            <person name="Nishikawa S."/>
            <person name="Nori F."/>
            <person name="Ohara O."/>
            <person name="Okazaki Y."/>
            <person name="Orlando V."/>
            <person name="Pang K.C."/>
            <person name="Pavan W.J."/>
            <person name="Pavesi G."/>
            <person name="Pesole G."/>
            <person name="Petrovsky N."/>
            <person name="Piazza S."/>
            <person name="Reed J."/>
            <person name="Reid J.F."/>
            <person name="Ring B.Z."/>
            <person name="Ringwald M."/>
            <person name="Rost B."/>
            <person name="Ruan Y."/>
            <person name="Salzberg S.L."/>
            <person name="Sandelin A."/>
            <person name="Schneider C."/>
            <person name="Schoenbach C."/>
            <person name="Sekiguchi K."/>
            <person name="Semple C.A."/>
            <person name="Seno S."/>
            <person name="Sessa L."/>
            <person name="Sheng Y."/>
            <person name="Shibata Y."/>
            <person name="Shimada H."/>
            <person name="Shimada K."/>
            <person name="Silva D."/>
            <person name="Sinclair B."/>
            <person name="Sperling S."/>
            <person name="Stupka E."/>
            <person name="Sugiura K."/>
            <person name="Sultana R."/>
            <person name="Takenaka Y."/>
            <person name="Taki K."/>
            <person name="Tammoja K."/>
            <person name="Tan S.L."/>
            <person name="Tang S."/>
            <person name="Taylor M.S."/>
            <person name="Tegner J."/>
            <person name="Teichmann S.A."/>
            <person name="Ueda H.R."/>
            <person name="van Nimwegen E."/>
            <person name="Verardo R."/>
            <person name="Wei C.L."/>
            <person name="Yagi K."/>
            <person name="Yamanishi H."/>
            <person name="Zabarovsky E."/>
            <person name="Zhu S."/>
            <person name="Zimmer A."/>
            <person name="Hide W."/>
            <person name="Bult C."/>
            <person name="Grimmond S.M."/>
            <person name="Teasdale R.D."/>
            <person name="Liu E.T."/>
            <person name="Brusic V."/>
            <person name="Quackenbush J."/>
            <person name="Wahlestedt C."/>
            <person name="Mattick J.S."/>
            <person name="Hume D.A."/>
            <person name="Kai C."/>
            <person name="Sasaki D."/>
            <person name="Tomaru Y."/>
            <person name="Fukuda S."/>
            <person name="Kanamori-Katayama M."/>
            <person name="Suzuki M."/>
            <person name="Aoki J."/>
            <person name="Arakawa T."/>
            <person name="Iida J."/>
            <person name="Imamura K."/>
            <person name="Itoh M."/>
            <person name="Kato T."/>
            <person name="Kawaji H."/>
            <person name="Kawagashira N."/>
            <person name="Kawashima T."/>
            <person name="Kojima M."/>
            <person name="Kondo S."/>
            <person name="Konno H."/>
            <person name="Nakano K."/>
            <person name="Ninomiya N."/>
            <person name="Nishio T."/>
            <person name="Okada M."/>
            <person name="Plessy C."/>
            <person name="Shibata K."/>
            <person name="Shiraki T."/>
            <person name="Suzuki S."/>
            <person name="Tagami M."/>
            <person name="Waki K."/>
            <person name="Watahiki A."/>
            <person name="Okamura-Oho Y."/>
            <person name="Suzuki H."/>
            <person name="Kawai J."/>
            <person name="Hayashizaki Y."/>
        </authorList>
    </citation>
    <scope>NUCLEOTIDE SEQUENCE [LARGE SCALE MRNA] (ISOFORM 2)</scope>
    <source>
        <strain>C57BL/6J</strain>
        <tissue>Corpora quadrigemina</tissue>
    </source>
</reference>
<reference key="3">
    <citation type="journal article" date="2009" name="PLoS Biol.">
        <title>Lineage-specific biology revealed by a finished genome assembly of the mouse.</title>
        <authorList>
            <person name="Church D.M."/>
            <person name="Goodstadt L."/>
            <person name="Hillier L.W."/>
            <person name="Zody M.C."/>
            <person name="Goldstein S."/>
            <person name="She X."/>
            <person name="Bult C.J."/>
            <person name="Agarwala R."/>
            <person name="Cherry J.L."/>
            <person name="DiCuccio M."/>
            <person name="Hlavina W."/>
            <person name="Kapustin Y."/>
            <person name="Meric P."/>
            <person name="Maglott D."/>
            <person name="Birtle Z."/>
            <person name="Marques A.C."/>
            <person name="Graves T."/>
            <person name="Zhou S."/>
            <person name="Teague B."/>
            <person name="Potamousis K."/>
            <person name="Churas C."/>
            <person name="Place M."/>
            <person name="Herschleb J."/>
            <person name="Runnheim R."/>
            <person name="Forrest D."/>
            <person name="Amos-Landgraf J."/>
            <person name="Schwartz D.C."/>
            <person name="Cheng Z."/>
            <person name="Lindblad-Toh K."/>
            <person name="Eichler E.E."/>
            <person name="Ponting C.P."/>
        </authorList>
    </citation>
    <scope>NUCLEOTIDE SEQUENCE [LARGE SCALE GENOMIC DNA]</scope>
    <source>
        <strain>C57BL/6J</strain>
    </source>
</reference>
<reference key="4">
    <citation type="journal article" date="2004" name="Genome Res.">
        <title>The status, quality, and expansion of the NIH full-length cDNA project: the Mammalian Gene Collection (MGC).</title>
        <authorList>
            <consortium name="The MGC Project Team"/>
        </authorList>
    </citation>
    <scope>NUCLEOTIDE SEQUENCE [LARGE SCALE MRNA] (ISOFORM 1)</scope>
    <source>
        <tissue>Brain</tissue>
    </source>
</reference>
<reference key="5">
    <citation type="submission" date="2003-04" db="EMBL/GenBank/DDBJ databases">
        <authorList>
            <person name="Sheng J."/>
            <person name="Wu X."/>
            <person name="Lin F."/>
            <person name="Yang X."/>
            <person name="Deng J."/>
        </authorList>
    </citation>
    <scope>NUCLEOTIDE SEQUENCE [GENOMIC DNA] OF 1-150</scope>
    <source>
        <strain>129/Sv</strain>
    </source>
</reference>
<reference key="6">
    <citation type="journal article" date="1994" name="J. Cell Sci.">
        <title>Identification of two N-terminal non-alpha-helical domain motifs important in the assembly of glial fibrillary acidic protein.</title>
        <authorList>
            <person name="Ralton J.E."/>
            <person name="Lu X."/>
            <person name="Hutcheson A.M."/>
            <person name="Quinlan R.A."/>
        </authorList>
    </citation>
    <scope>NUCLEOTIDE SEQUENCE [GENOMIC DNA] OF 1-26</scope>
    <source>
        <tissue>Embryo</tissue>
    </source>
</reference>
<reference key="7">
    <citation type="journal article" date="1984" name="Proc. Natl. Acad. Sci. U.S.A.">
        <title>Sequence of a cDNA clone encoding mouse glial fibrillary acidic protein: structural conservation of intermediate filaments.</title>
        <authorList>
            <person name="Lewis S.A."/>
            <person name="Balcarek J.M."/>
            <person name="Krek V."/>
            <person name="Shelanski M."/>
            <person name="Cowan N.J."/>
        </authorList>
    </citation>
    <scope>NUCLEOTIDE SEQUENCE [MRNA] OF 28-430 (ISOFORM 1)</scope>
</reference>
<reference key="8">
    <citation type="journal article" date="1985" name="Ann. N. Y. Acad. Sci.">
        <title>Structural implications of a cDNA clone encoding mouse glial fibrillary acidic protein.</title>
        <authorList>
            <person name="Cowan N.J."/>
            <person name="Lewis S.A."/>
            <person name="Balcarek J.M."/>
            <person name="Krek V."/>
            <person name="Shelanski M.L."/>
        </authorList>
    </citation>
    <scope>NUCLEOTIDE SEQUENCE [MRNA] OF 28-430 (ISOFORM 1)</scope>
</reference>
<reference key="9">
    <citation type="journal article" date="1990" name="Brain Res. Mol. Brain Res.">
        <title>Characterization of human cDNA and genomic clones for glial fibrillary acidic protein.</title>
        <authorList>
            <person name="Brenner M."/>
            <person name="Lampel K."/>
            <person name="Nakatani Y."/>
            <person name="Mill J."/>
            <person name="Banner C."/>
            <person name="Mearow K."/>
            <person name="Dohadwala M."/>
            <person name="Lipsky R."/>
            <person name="Freese E."/>
        </authorList>
    </citation>
    <scope>SEQUENCE REVISION TO N-TERMINUS</scope>
</reference>
<reference key="10">
    <citation type="journal article" date="2001" name="Mamm. Genome">
        <title>High-throughput sequence identification of gene coding variants within alcohol-related QTLs.</title>
        <authorList>
            <person name="Ehringer M.A."/>
            <person name="Thompson J."/>
            <person name="Conroy O."/>
            <person name="Xu Y."/>
            <person name="Yang F."/>
            <person name="Canniff J."/>
            <person name="Beeson M."/>
            <person name="Gordon L."/>
            <person name="Bennett B."/>
            <person name="Johnson T.E."/>
            <person name="Sikela J.M."/>
        </authorList>
    </citation>
    <scope>NUCLEOTIDE SEQUENCE [MRNA] OF 31-430 (ISOFORM 1)</scope>
    <source>
        <strain>ISS</strain>
    </source>
</reference>
<reference key="11">
    <citation type="submission" date="2006-11" db="EMBL/GenBank/DDBJ databases">
        <title>Novel metastatic mouse tumor cells express multiple properties of macrophages.</title>
        <authorList>
            <person name="Huysentruyt L.C."/>
            <person name="Banerjee D."/>
            <person name="Seyfried T.N."/>
        </authorList>
    </citation>
    <scope>NUCLEOTIDE SEQUENCE [MRNA] OF 92-275 (ISOFORMS 1/2)</scope>
    <source>
        <strain>C57BL/6J</strain>
    </source>
</reference>
<reference key="12">
    <citation type="submission" date="2007-03" db="UniProtKB">
        <authorList>
            <person name="Lubec G."/>
            <person name="Klug S."/>
            <person name="Kang S.U."/>
        </authorList>
    </citation>
    <scope>PROTEIN SEQUENCE OF 47-63; 139-149; 187-198; 210-233; 285-297 AND 374-387</scope>
    <scope>IDENTIFICATION BY MASS SPECTROMETRY</scope>
    <source>
        <strain>C57BL/6J</strain>
        <tissue>Brain</tissue>
        <tissue>Hippocampus</tissue>
    </source>
</reference>
<reference key="13">
    <citation type="submission" date="2006-08" db="EMBL/GenBank/DDBJ databases">
        <title>Progressive demyelination despite a temporary increased number of NG-2 positive putative oligodendroglial progenitor cells in Theiler`s murine encephalomyelitis.</title>
        <authorList>
            <person name="Ulrich R."/>
            <person name="Alldinger S."/>
            <person name="Baumgaertner W."/>
        </authorList>
    </citation>
    <scope>NUCLEOTIDE SEQUENCE [MRNA] OF 169-237 (ISOFORMS 1/2)</scope>
    <source>
        <strain>SJL/JHanHsd</strain>
        <tissue>Brain</tissue>
    </source>
</reference>
<reference key="14">
    <citation type="submission" date="2009-01" db="UniProtKB">
        <authorList>
            <person name="Lubec G."/>
            <person name="Sunyer B."/>
            <person name="Chen W.-Q."/>
        </authorList>
    </citation>
    <scope>PROTEIN SEQUENCE OF 354-364</scope>
    <scope>IDENTIFICATION BY MASS SPECTROMETRY</scope>
    <source>
        <strain>OF1</strain>
        <tissue>Hippocampus</tissue>
    </source>
</reference>
<reference key="15">
    <citation type="journal article" date="2003" name="Genomics">
        <title>Genetic polymorphism and sequence evolution of an alternatively spliced exon of the glial fibrillary acidic protein gene, GFAP.</title>
        <authorList>
            <person name="Singh R."/>
            <person name="Nielsen A.L."/>
            <person name="Johansen M.G."/>
            <person name="Jorgensen A.L."/>
        </authorList>
    </citation>
    <scope>NUCLEOTIDE SEQUENCE [GENOMIC DNA] OF 388-430 (ISOFORM 2)</scope>
    <source>
        <tissue>Blood</tissue>
    </source>
</reference>
<reference key="16">
    <citation type="journal article" date="2002" name="J. Biol. Chem.">
        <title>A new splice variant of glial fibrillary acidic protein GFAPepsilon, interacts with the presenilin proteins.</title>
        <authorList>
            <person name="Nielsen A.L."/>
            <person name="Holm I.E."/>
            <person name="Johansen M."/>
            <person name="Bonven B."/>
            <person name="Jorgensen P."/>
            <person name="Jorgensen A.L."/>
        </authorList>
    </citation>
    <scope>TISSUE SPECIFICITY</scope>
</reference>
<reference key="17">
    <citation type="journal article" date="2006" name="Mol. Cell. Proteomics">
        <title>Comprehensive identification of phosphorylation sites in postsynaptic density preparations.</title>
        <authorList>
            <person name="Trinidad J.C."/>
            <person name="Specht C.G."/>
            <person name="Thalhammer A."/>
            <person name="Schoepfer R."/>
            <person name="Burlingame A.L."/>
        </authorList>
    </citation>
    <scope>PHOSPHORYLATION [LARGE SCALE ANALYSIS] AT THR-40</scope>
    <scope>IDENTIFICATION BY MASS SPECTROMETRY [LARGE SCALE ANALYSIS]</scope>
    <source>
        <tissue>Brain</tissue>
    </source>
</reference>
<reference key="18">
    <citation type="journal article" date="2007" name="J. Cell Sci.">
        <title>Synemin is expressed in reactive astrocytes in neurotrauma and interacts differentially with vimentin and GFAP intermediate filament networks.</title>
        <authorList>
            <person name="Jing R."/>
            <person name="Wilhelmsson U."/>
            <person name="Goodwill W."/>
            <person name="Li L."/>
            <person name="Pan Y."/>
            <person name="Pekny M."/>
            <person name="Skalli O."/>
        </authorList>
    </citation>
    <scope>INTERACTION WITH SYNM</scope>
</reference>
<reference key="19">
    <citation type="journal article" date="2010" name="Cell">
        <title>A tissue-specific atlas of mouse protein phosphorylation and expression.</title>
        <authorList>
            <person name="Huttlin E.L."/>
            <person name="Jedrychowski M.P."/>
            <person name="Elias J.E."/>
            <person name="Goswami T."/>
            <person name="Rad R."/>
            <person name="Beausoleil S.A."/>
            <person name="Villen J."/>
            <person name="Haas W."/>
            <person name="Sowa M.E."/>
            <person name="Gygi S.P."/>
        </authorList>
    </citation>
    <scope>IDENTIFICATION BY MASS SPECTROMETRY [LARGE SCALE ANALYSIS]</scope>
    <source>
        <tissue>Brain</tissue>
    </source>
</reference>
<reference key="20">
    <citation type="journal article" date="2014" name="Mol. Cell. Proteomics">
        <title>Immunoaffinity enrichment and mass spectrometry analysis of protein methylation.</title>
        <authorList>
            <person name="Guo A."/>
            <person name="Gu H."/>
            <person name="Zhou J."/>
            <person name="Mulhern D."/>
            <person name="Wang Y."/>
            <person name="Lee K.A."/>
            <person name="Yang V."/>
            <person name="Aguiar M."/>
            <person name="Kornhauser J."/>
            <person name="Jia X."/>
            <person name="Ren J."/>
            <person name="Beausoleil S.A."/>
            <person name="Silva J.C."/>
            <person name="Vemulapalli V."/>
            <person name="Bedford M.T."/>
            <person name="Comb M.J."/>
        </authorList>
    </citation>
    <scope>METHYLATION [LARGE SCALE ANALYSIS] AT ARG-11 AND ARG-20</scope>
    <scope>IDENTIFICATION BY MASS SPECTROMETRY [LARGE SCALE ANALYSIS]</scope>
    <source>
        <tissue>Brain</tissue>
    </source>
</reference>
<comment type="function">
    <text>GFAP, a class-III intermediate filament, is a cell-specific marker that, during the development of the central nervous system, distinguishes astrocytes from other glial cells.</text>
</comment>
<comment type="subunit">
    <text evidence="6">Interacts with SYNM.</text>
</comment>
<comment type="subunit">
    <molecule>Isoform 2</molecule>
    <text evidence="2">Interacts with PSEN1 (via N-terminus).</text>
</comment>
<comment type="subcellular location">
    <subcellularLocation>
        <location evidence="2">Cytoplasm</location>
    </subcellularLocation>
    <text evidence="2">Associated with intermediate filaments.</text>
</comment>
<comment type="alternative products">
    <event type="alternative splicing"/>
    <isoform>
        <id>P03995-1</id>
        <name>1</name>
        <name evidence="7">GFAP alpha</name>
        <sequence type="displayed"/>
    </isoform>
    <isoform>
        <id>P03995-2</id>
        <name>2</name>
        <name evidence="7">GFAP epsilon</name>
        <sequence type="described" ref="VSP_017053"/>
    </isoform>
</comment>
<comment type="tissue specificity">
    <text evidence="5">Brain; isoform 2 expressed at 20-fold lower level than isoform 1.</text>
</comment>
<comment type="PTM">
    <text evidence="2">Phosphorylated by PKN1.</text>
</comment>
<comment type="similarity">
    <text evidence="4">Belongs to the intermediate filament family.</text>
</comment>
<comment type="sequence caution" evidence="9">
    <conflict type="erroneous initiation">
        <sequence resource="EMBL-CDS" id="CAA26571"/>
    </conflict>
</comment>
<gene>
    <name type="primary">Gfap</name>
</gene>
<feature type="chain" id="PRO_0000063806" description="Glial fibrillary acidic protein">
    <location>
        <begin position="1"/>
        <end position="430"/>
    </location>
</feature>
<feature type="domain" description="IF rod" evidence="4">
    <location>
        <begin position="66"/>
        <end position="374"/>
    </location>
</feature>
<feature type="region of interest" description="Head">
    <location>
        <begin position="1"/>
        <end position="69"/>
    </location>
</feature>
<feature type="region of interest" description="Coil 1A">
    <location>
        <begin position="70"/>
        <end position="101"/>
    </location>
</feature>
<feature type="region of interest" description="Linker 1">
    <location>
        <begin position="102"/>
        <end position="112"/>
    </location>
</feature>
<feature type="region of interest" description="Coil 1B">
    <location>
        <begin position="113"/>
        <end position="211"/>
    </location>
</feature>
<feature type="region of interest" description="Linker 12">
    <location>
        <begin position="212"/>
        <end position="227"/>
    </location>
</feature>
<feature type="region of interest" description="Coil 2A">
    <location>
        <begin position="228"/>
        <end position="249"/>
    </location>
</feature>
<feature type="region of interest" description="Linker 2">
    <location>
        <begin position="250"/>
        <end position="253"/>
    </location>
</feature>
<feature type="region of interest" description="Coil 2B">
    <location>
        <begin position="254"/>
        <end position="374"/>
    </location>
</feature>
<feature type="region of interest" description="Tail">
    <location>
        <begin position="375"/>
        <end position="430"/>
    </location>
</feature>
<feature type="modified residue" description="Phosphothreonine; by AURKB and ROCK1" evidence="2">
    <location>
        <position position="7"/>
    </location>
</feature>
<feature type="modified residue" description="Omega-N-methylarginine" evidence="11">
    <location>
        <position position="11"/>
    </location>
</feature>
<feature type="modified residue" description="Phosphoserine; by AURKB and ROCK1" evidence="2">
    <location>
        <position position="12"/>
    </location>
</feature>
<feature type="modified residue" description="Omega-N-methylarginine" evidence="11">
    <location>
        <position position="20"/>
    </location>
</feature>
<feature type="modified residue" description="Citrulline" evidence="1">
    <location>
        <position position="33"/>
    </location>
</feature>
<feature type="modified residue" description="Phosphoserine; by AURKB and ROCK1" evidence="2">
    <location>
        <position position="35"/>
    </location>
</feature>
<feature type="modified residue" description="Phosphothreonine" evidence="10">
    <location>
        <position position="40"/>
    </location>
</feature>
<feature type="modified residue" description="Phosphoserine" evidence="3">
    <location>
        <position position="79"/>
    </location>
</feature>
<feature type="modified residue" description="Phosphothreonine" evidence="3">
    <location>
        <position position="107"/>
    </location>
</feature>
<feature type="modified residue" description="Phosphothreonine" evidence="3">
    <location>
        <position position="147"/>
    </location>
</feature>
<feature type="modified residue" description="Phosphoserine" evidence="3">
    <location>
        <position position="266"/>
    </location>
</feature>
<feature type="modified residue" description="Citrulline" evidence="1">
    <location>
        <position position="267"/>
    </location>
</feature>
<feature type="modified residue" description="Phosphoserine" evidence="3">
    <location>
        <position position="320"/>
    </location>
</feature>
<feature type="modified residue" description="Phosphothreonine" evidence="3">
    <location>
        <position position="380"/>
    </location>
</feature>
<feature type="modified residue" description="Phosphoserine" evidence="3">
    <location>
        <position position="382"/>
    </location>
</feature>
<feature type="modified residue" description="Citrulline" evidence="1">
    <location>
        <position position="403"/>
    </location>
</feature>
<feature type="modified residue" description="Citrulline" evidence="1">
    <location>
        <position position="413"/>
    </location>
</feature>
<feature type="splice variant" id="VSP_017053" description="In isoform 2." evidence="8">
    <original>ETSLDTKSVSEGHLKRNIVVKTVEMRDGEVIKDSKQEHKDVVM</original>
    <variation>GGKSTKEGEGQKVTRPLKRLTIQVVPIQAHQIENGALPALP</variation>
    <location>
        <begin position="388"/>
        <end position="430"/>
    </location>
</feature>
<feature type="sequence conflict" description="In Ref. 5; AAP33501 and 10; AAK56091." evidence="9" ref="5 10">
    <original>F</original>
    <variation>L</variation>
    <location>
        <position position="141"/>
    </location>
</feature>
<feature type="sequence conflict" description="In Ref. 1; CAA26571, 7; AAA37678, 8; AAA37679 and 13; ABI54133." evidence="9" ref="1 7 8 13">
    <original>D</original>
    <variation>H</variation>
    <location>
        <position position="174"/>
    </location>
</feature>
<feature type="sequence conflict" description="In Ref. 2; BAE24257." evidence="9" ref="2">
    <original>R</original>
    <variation>S</variation>
    <location>
        <position position="180"/>
    </location>
</feature>
<feature type="sequence conflict" description="In Ref. 1; CAA26571, 7; AAA37678 and 8; AAA37679." evidence="9" ref="1 7 8">
    <original>E</original>
    <variation>D</variation>
    <location>
        <position position="207"/>
    </location>
</feature>
<feature type="sequence conflict" description="In Ref. 1; CAA26571." evidence="9" ref="1">
    <original>Q</original>
    <variation>H</variation>
    <location>
        <position position="347"/>
    </location>
</feature>
<evidence type="ECO:0000250" key="1"/>
<evidence type="ECO:0000250" key="2">
    <source>
        <dbReference type="UniProtKB" id="P14136"/>
    </source>
</evidence>
<evidence type="ECO:0000250" key="3">
    <source>
        <dbReference type="UniProtKB" id="P47819"/>
    </source>
</evidence>
<evidence type="ECO:0000255" key="4">
    <source>
        <dbReference type="PROSITE-ProRule" id="PRU01188"/>
    </source>
</evidence>
<evidence type="ECO:0000269" key="5">
    <source>
    </source>
</evidence>
<evidence type="ECO:0000269" key="6">
    <source>
    </source>
</evidence>
<evidence type="ECO:0000303" key="7">
    <source>
    </source>
</evidence>
<evidence type="ECO:0000303" key="8">
    <source>
    </source>
</evidence>
<evidence type="ECO:0000305" key="9"/>
<evidence type="ECO:0007744" key="10">
    <source>
    </source>
</evidence>
<evidence type="ECO:0007744" key="11">
    <source>
    </source>
</evidence>
<accession>P03995</accession>
<accession>A1E2H7</accession>
<accession>A2AH87</accession>
<accession>B2RTI7</accession>
<accession>Q09J71</accession>
<accession>Q3USS4</accession>
<accession>Q496R4</accession>
<accession>Q496S3</accession>
<accession>Q7TQ30</accession>
<accession>Q80VX6</accession>
<accession>Q925K2</accession>
<accession>Q925K3</accession>
<keyword id="KW-0025">Alternative splicing</keyword>
<keyword id="KW-0164">Citrullination</keyword>
<keyword id="KW-0175">Coiled coil</keyword>
<keyword id="KW-0963">Cytoplasm</keyword>
<keyword id="KW-0903">Direct protein sequencing</keyword>
<keyword id="KW-0403">Intermediate filament</keyword>
<keyword id="KW-0488">Methylation</keyword>
<keyword id="KW-0597">Phosphoprotein</keyword>
<keyword id="KW-1185">Reference proteome</keyword>
<dbReference type="EMBL" id="X02801">
    <property type="protein sequence ID" value="CAA26571.1"/>
    <property type="status" value="ALT_INIT"/>
    <property type="molecule type" value="Genomic_DNA"/>
</dbReference>
<dbReference type="EMBL" id="AK140151">
    <property type="protein sequence ID" value="BAE24257.1"/>
    <property type="molecule type" value="mRNA"/>
</dbReference>
<dbReference type="EMBL" id="AL731670">
    <property type="status" value="NOT_ANNOTATED_CDS"/>
    <property type="molecule type" value="Genomic_DNA"/>
</dbReference>
<dbReference type="EMBL" id="AY279974">
    <property type="protein sequence ID" value="AAP33501.1"/>
    <property type="molecule type" value="Genomic_DNA"/>
</dbReference>
<dbReference type="EMBL" id="X78141">
    <property type="protein sequence ID" value="CAA55020.1"/>
    <property type="molecule type" value="Genomic_DNA"/>
</dbReference>
<dbReference type="EMBL" id="BC100728">
    <property type="protein sequence ID" value="AAI00729.1"/>
    <property type="molecule type" value="mRNA"/>
</dbReference>
<dbReference type="EMBL" id="BC100737">
    <property type="protein sequence ID" value="AAI00738.1"/>
    <property type="molecule type" value="mRNA"/>
</dbReference>
<dbReference type="EMBL" id="BC101968">
    <property type="protein sequence ID" value="AAI01969.1"/>
    <property type="molecule type" value="mRNA"/>
</dbReference>
<dbReference type="EMBL" id="BC103571">
    <property type="protein sequence ID" value="AAI03572.1"/>
    <property type="molecule type" value="mRNA"/>
</dbReference>
<dbReference type="EMBL" id="BC139357">
    <property type="protein sequence ID" value="AAI39358.1"/>
    <property type="molecule type" value="mRNA"/>
</dbReference>
<dbReference type="EMBL" id="BC139358">
    <property type="protein sequence ID" value="AAI39359.1"/>
    <property type="molecule type" value="mRNA"/>
</dbReference>
<dbReference type="EMBL" id="K01347">
    <property type="protein sequence ID" value="AAA37678.1"/>
    <property type="molecule type" value="mRNA"/>
</dbReference>
<dbReference type="EMBL" id="M25937">
    <property type="protein sequence ID" value="AAA37679.1"/>
    <property type="molecule type" value="mRNA"/>
</dbReference>
<dbReference type="EMBL" id="AF332061">
    <property type="protein sequence ID" value="AAK56090.1"/>
    <property type="molecule type" value="mRNA"/>
</dbReference>
<dbReference type="EMBL" id="AF332062">
    <property type="protein sequence ID" value="AAK56091.1"/>
    <property type="molecule type" value="mRNA"/>
</dbReference>
<dbReference type="EMBL" id="EF101554">
    <property type="protein sequence ID" value="ABK96803.1"/>
    <property type="molecule type" value="mRNA"/>
</dbReference>
<dbReference type="EMBL" id="DQ887822">
    <property type="protein sequence ID" value="ABI54133.1"/>
    <property type="molecule type" value="mRNA"/>
</dbReference>
<dbReference type="EMBL" id="AY142200">
    <property type="protein sequence ID" value="AAN87913.1"/>
    <property type="molecule type" value="Genomic_DNA"/>
</dbReference>
<dbReference type="CCDS" id="CCDS25507.1">
    <molecule id="P03995-1"/>
</dbReference>
<dbReference type="CCDS" id="CCDS48950.1">
    <molecule id="P03995-2"/>
</dbReference>
<dbReference type="PIR" id="B60052">
    <property type="entry name" value="VEMSGF"/>
</dbReference>
<dbReference type="RefSeq" id="NP_001124492.1">
    <molecule id="P03995-2"/>
    <property type="nucleotide sequence ID" value="NM_001131020.1"/>
</dbReference>
<dbReference type="RefSeq" id="NP_034407.2">
    <molecule id="P03995-1"/>
    <property type="nucleotide sequence ID" value="NM_010277.3"/>
</dbReference>
<dbReference type="SMR" id="P03995"/>
<dbReference type="BioGRID" id="199899">
    <property type="interactions" value="33"/>
</dbReference>
<dbReference type="DIP" id="DIP-1084N"/>
<dbReference type="FunCoup" id="P03995">
    <property type="interactions" value="444"/>
</dbReference>
<dbReference type="IntAct" id="P03995">
    <property type="interactions" value="6"/>
</dbReference>
<dbReference type="MINT" id="P03995"/>
<dbReference type="STRING" id="10090.ENSMUSP00000064691"/>
<dbReference type="GlyGen" id="P03995">
    <property type="glycosylation" value="2 sites, 1 N-linked glycan (1 site), 1 O-linked glycan (1 site)"/>
</dbReference>
<dbReference type="iPTMnet" id="P03995"/>
<dbReference type="PhosphoSitePlus" id="P03995"/>
<dbReference type="SwissPalm" id="P03995"/>
<dbReference type="CPTAC" id="non-CPTAC-3312"/>
<dbReference type="jPOST" id="P03995"/>
<dbReference type="PaxDb" id="10090-ENSMUSP00000064691"/>
<dbReference type="PeptideAtlas" id="P03995"/>
<dbReference type="ProteomicsDB" id="271212">
    <molecule id="P03995-1"/>
</dbReference>
<dbReference type="ProteomicsDB" id="271213">
    <molecule id="P03995-2"/>
</dbReference>
<dbReference type="ABCD" id="P03995">
    <property type="antibodies" value="5 sequenced antibodies"/>
</dbReference>
<dbReference type="Antibodypedia" id="3505">
    <property type="antibodies" value="3266 antibodies from 63 providers"/>
</dbReference>
<dbReference type="DNASU" id="14580"/>
<dbReference type="Ensembl" id="ENSMUST00000067444.10">
    <molecule id="P03995-1"/>
    <property type="protein sequence ID" value="ENSMUSP00000064691.4"/>
    <property type="gene ID" value="ENSMUSG00000020932.15"/>
</dbReference>
<dbReference type="Ensembl" id="ENSMUST00000077902.5">
    <molecule id="P03995-2"/>
    <property type="protein sequence ID" value="ENSMUSP00000077061.5"/>
    <property type="gene ID" value="ENSMUSG00000020932.15"/>
</dbReference>
<dbReference type="GeneID" id="14580"/>
<dbReference type="KEGG" id="mmu:14580"/>
<dbReference type="UCSC" id="uc007lsw.2">
    <molecule id="P03995-1"/>
    <property type="organism name" value="mouse"/>
</dbReference>
<dbReference type="UCSC" id="uc007lsx.2">
    <molecule id="P03995-2"/>
    <property type="organism name" value="mouse"/>
</dbReference>
<dbReference type="AGR" id="MGI:95697"/>
<dbReference type="CTD" id="2670"/>
<dbReference type="MGI" id="MGI:95697">
    <property type="gene designation" value="Gfap"/>
</dbReference>
<dbReference type="VEuPathDB" id="HostDB:ENSMUSG00000020932"/>
<dbReference type="eggNOG" id="ENOG502RKU6">
    <property type="taxonomic scope" value="Eukaryota"/>
</dbReference>
<dbReference type="GeneTree" id="ENSGT00940000159539"/>
<dbReference type="HOGENOM" id="CLU_012560_7_4_1"/>
<dbReference type="InParanoid" id="P03995"/>
<dbReference type="OMA" id="QYETMAT"/>
<dbReference type="OrthoDB" id="2441647at2759"/>
<dbReference type="PhylomeDB" id="P03995"/>
<dbReference type="TreeFam" id="TF330122"/>
<dbReference type="BioGRID-ORCS" id="14580">
    <property type="hits" value="0 hits in 77 CRISPR screens"/>
</dbReference>
<dbReference type="CD-CODE" id="CE726F99">
    <property type="entry name" value="Postsynaptic density"/>
</dbReference>
<dbReference type="PRO" id="PR:P03995"/>
<dbReference type="Proteomes" id="UP000000589">
    <property type="component" value="Chromosome 11"/>
</dbReference>
<dbReference type="RNAct" id="P03995">
    <property type="molecule type" value="protein"/>
</dbReference>
<dbReference type="Bgee" id="ENSMUSG00000020932">
    <property type="expression patterns" value="Expressed in cranial nerve II and 119 other cell types or tissues"/>
</dbReference>
<dbReference type="GO" id="GO:0097450">
    <property type="term" value="C:astrocyte end-foot"/>
    <property type="evidence" value="ECO:0000314"/>
    <property type="project" value="MGI"/>
</dbReference>
<dbReference type="GO" id="GO:0097449">
    <property type="term" value="C:astrocyte projection"/>
    <property type="evidence" value="ECO:0000314"/>
    <property type="project" value="MGI"/>
</dbReference>
<dbReference type="GO" id="GO:0044297">
    <property type="term" value="C:cell body"/>
    <property type="evidence" value="ECO:0000314"/>
    <property type="project" value="MGI"/>
</dbReference>
<dbReference type="GO" id="GO:0042995">
    <property type="term" value="C:cell projection"/>
    <property type="evidence" value="ECO:0000314"/>
    <property type="project" value="MGI"/>
</dbReference>
<dbReference type="GO" id="GO:0005737">
    <property type="term" value="C:cytoplasm"/>
    <property type="evidence" value="ECO:0000314"/>
    <property type="project" value="MGI"/>
</dbReference>
<dbReference type="GO" id="GO:0098574">
    <property type="term" value="C:cytoplasmic side of lysosomal membrane"/>
    <property type="evidence" value="ECO:0007669"/>
    <property type="project" value="Ensembl"/>
</dbReference>
<dbReference type="GO" id="GO:0005856">
    <property type="term" value="C:cytoskeleton"/>
    <property type="evidence" value="ECO:0000314"/>
    <property type="project" value="MGI"/>
</dbReference>
<dbReference type="GO" id="GO:0097386">
    <property type="term" value="C:glial cell projection"/>
    <property type="evidence" value="ECO:0000314"/>
    <property type="project" value="MGI"/>
</dbReference>
<dbReference type="GO" id="GO:0005882">
    <property type="term" value="C:intermediate filament"/>
    <property type="evidence" value="ECO:0000314"/>
    <property type="project" value="MGI"/>
</dbReference>
<dbReference type="GO" id="GO:0016020">
    <property type="term" value="C:membrane"/>
    <property type="evidence" value="ECO:0000314"/>
    <property type="project" value="MGI"/>
</dbReference>
<dbReference type="GO" id="GO:0043209">
    <property type="term" value="C:myelin sheath"/>
    <property type="evidence" value="ECO:0007005"/>
    <property type="project" value="UniProtKB"/>
</dbReference>
<dbReference type="GO" id="GO:0042802">
    <property type="term" value="F:identical protein binding"/>
    <property type="evidence" value="ECO:0007669"/>
    <property type="project" value="Ensembl"/>
</dbReference>
<dbReference type="GO" id="GO:0005178">
    <property type="term" value="F:integrin binding"/>
    <property type="evidence" value="ECO:0000266"/>
    <property type="project" value="MGI"/>
</dbReference>
<dbReference type="GO" id="GO:0019900">
    <property type="term" value="F:kinase binding"/>
    <property type="evidence" value="ECO:0007669"/>
    <property type="project" value="Ensembl"/>
</dbReference>
<dbReference type="GO" id="GO:0005200">
    <property type="term" value="F:structural constituent of cytoskeleton"/>
    <property type="evidence" value="ECO:0000315"/>
    <property type="project" value="MGI"/>
</dbReference>
<dbReference type="GO" id="GO:0014002">
    <property type="term" value="P:astrocyte development"/>
    <property type="evidence" value="ECO:0000316"/>
    <property type="project" value="MGI"/>
</dbReference>
<dbReference type="GO" id="GO:0060020">
    <property type="term" value="P:Bergmann glial cell differentiation"/>
    <property type="evidence" value="ECO:0000315"/>
    <property type="project" value="MGI"/>
</dbReference>
<dbReference type="GO" id="GO:0070779">
    <property type="term" value="P:D-aspartate import across plasma membrane"/>
    <property type="evidence" value="ECO:0000315"/>
    <property type="project" value="MGI"/>
</dbReference>
<dbReference type="GO" id="GO:0030198">
    <property type="term" value="P:extracellular matrix organization"/>
    <property type="evidence" value="ECO:0000315"/>
    <property type="project" value="MGI"/>
</dbReference>
<dbReference type="GO" id="GO:0010467">
    <property type="term" value="P:gene expression"/>
    <property type="evidence" value="ECO:0000315"/>
    <property type="project" value="MGI"/>
</dbReference>
<dbReference type="GO" id="GO:0045109">
    <property type="term" value="P:intermediate filament organization"/>
    <property type="evidence" value="ECO:0000315"/>
    <property type="project" value="MGI"/>
</dbReference>
<dbReference type="GO" id="GO:0045103">
    <property type="term" value="P:intermediate filament-based process"/>
    <property type="evidence" value="ECO:0000315"/>
    <property type="project" value="MGI"/>
</dbReference>
<dbReference type="GO" id="GO:0006886">
    <property type="term" value="P:intracellular protein transport"/>
    <property type="evidence" value="ECO:0000315"/>
    <property type="project" value="MGI"/>
</dbReference>
<dbReference type="GO" id="GO:0060291">
    <property type="term" value="P:long-term synaptic potentiation"/>
    <property type="evidence" value="ECO:0000315"/>
    <property type="project" value="MGI"/>
</dbReference>
<dbReference type="GO" id="GO:0010977">
    <property type="term" value="P:negative regulation of neuron projection development"/>
    <property type="evidence" value="ECO:0000315"/>
    <property type="project" value="MGI"/>
</dbReference>
<dbReference type="GO" id="GO:0031175">
    <property type="term" value="P:neuron projection development"/>
    <property type="evidence" value="ECO:0000315"/>
    <property type="project" value="MGI"/>
</dbReference>
<dbReference type="GO" id="GO:0031102">
    <property type="term" value="P:neuron projection regeneration"/>
    <property type="evidence" value="ECO:0000315"/>
    <property type="project" value="MGI"/>
</dbReference>
<dbReference type="GO" id="GO:0010625">
    <property type="term" value="P:positive regulation of Schwann cell proliferation"/>
    <property type="evidence" value="ECO:0000315"/>
    <property type="project" value="MGI"/>
</dbReference>
<dbReference type="GO" id="GO:1904714">
    <property type="term" value="P:regulation of chaperone-mediated autophagy"/>
    <property type="evidence" value="ECO:0000315"/>
    <property type="project" value="ParkinsonsUK-UCL"/>
</dbReference>
<dbReference type="GO" id="GO:0051580">
    <property type="term" value="P:regulation of neurotransmitter uptake"/>
    <property type="evidence" value="ECO:0000315"/>
    <property type="project" value="MGI"/>
</dbReference>
<dbReference type="GO" id="GO:0014010">
    <property type="term" value="P:Schwann cell proliferation"/>
    <property type="evidence" value="ECO:0000315"/>
    <property type="project" value="MGI"/>
</dbReference>
<dbReference type="FunFam" id="1.20.5.1160:FF:000001">
    <property type="entry name" value="Keratin type II"/>
    <property type="match status" value="1"/>
</dbReference>
<dbReference type="FunFam" id="1.20.5.170:FF:000002">
    <property type="entry name" value="Type I keratin KA11"/>
    <property type="match status" value="1"/>
</dbReference>
<dbReference type="FunFam" id="1.20.5.500:FF:000001">
    <property type="entry name" value="Type II keratin 23"/>
    <property type="match status" value="1"/>
</dbReference>
<dbReference type="Gene3D" id="1.20.5.170">
    <property type="match status" value="1"/>
</dbReference>
<dbReference type="Gene3D" id="1.20.5.500">
    <property type="entry name" value="Single helix bin"/>
    <property type="match status" value="1"/>
</dbReference>
<dbReference type="Gene3D" id="1.20.5.1160">
    <property type="entry name" value="Vasodilator-stimulated phosphoprotein"/>
    <property type="match status" value="1"/>
</dbReference>
<dbReference type="InterPro" id="IPR018039">
    <property type="entry name" value="IF_conserved"/>
</dbReference>
<dbReference type="InterPro" id="IPR039008">
    <property type="entry name" value="IF_rod_dom"/>
</dbReference>
<dbReference type="InterPro" id="IPR006821">
    <property type="entry name" value="Intermed_filament_DNA-bd"/>
</dbReference>
<dbReference type="InterPro" id="IPR050405">
    <property type="entry name" value="Intermediate_filament"/>
</dbReference>
<dbReference type="PANTHER" id="PTHR45652">
    <property type="entry name" value="GLIAL FIBRILLARY ACIDIC PROTEIN"/>
    <property type="match status" value="1"/>
</dbReference>
<dbReference type="PANTHER" id="PTHR45652:SF9">
    <property type="entry name" value="GLIAL FIBRILLARY ACIDIC PROTEIN"/>
    <property type="match status" value="1"/>
</dbReference>
<dbReference type="Pfam" id="PF00038">
    <property type="entry name" value="Filament"/>
    <property type="match status" value="1"/>
</dbReference>
<dbReference type="Pfam" id="PF04732">
    <property type="entry name" value="Filament_head"/>
    <property type="match status" value="1"/>
</dbReference>
<dbReference type="SMART" id="SM01391">
    <property type="entry name" value="Filament"/>
    <property type="match status" value="1"/>
</dbReference>
<dbReference type="SUPFAM" id="SSF64593">
    <property type="entry name" value="Intermediate filament protein, coiled coil region"/>
    <property type="match status" value="2"/>
</dbReference>
<dbReference type="PROSITE" id="PS00226">
    <property type="entry name" value="IF_ROD_1"/>
    <property type="match status" value="1"/>
</dbReference>
<dbReference type="PROSITE" id="PS51842">
    <property type="entry name" value="IF_ROD_2"/>
    <property type="match status" value="1"/>
</dbReference>
<name>GFAP_MOUSE</name>